<accession>A7ZSC5</accession>
<name>RL13_ECO24</name>
<dbReference type="EMBL" id="CP000800">
    <property type="protein sequence ID" value="ABV16675.1"/>
    <property type="molecule type" value="Genomic_DNA"/>
</dbReference>
<dbReference type="RefSeq" id="WP_000847559.1">
    <property type="nucleotide sequence ID" value="NC_009801.1"/>
</dbReference>
<dbReference type="SMR" id="A7ZSC5"/>
<dbReference type="GeneID" id="89518067"/>
<dbReference type="KEGG" id="ecw:EcE24377A_3714"/>
<dbReference type="HOGENOM" id="CLU_082184_2_2_6"/>
<dbReference type="Proteomes" id="UP000001122">
    <property type="component" value="Chromosome"/>
</dbReference>
<dbReference type="GO" id="GO:0022625">
    <property type="term" value="C:cytosolic large ribosomal subunit"/>
    <property type="evidence" value="ECO:0007669"/>
    <property type="project" value="TreeGrafter"/>
</dbReference>
<dbReference type="GO" id="GO:0003729">
    <property type="term" value="F:mRNA binding"/>
    <property type="evidence" value="ECO:0007669"/>
    <property type="project" value="TreeGrafter"/>
</dbReference>
<dbReference type="GO" id="GO:0003735">
    <property type="term" value="F:structural constituent of ribosome"/>
    <property type="evidence" value="ECO:0007669"/>
    <property type="project" value="InterPro"/>
</dbReference>
<dbReference type="GO" id="GO:0017148">
    <property type="term" value="P:negative regulation of translation"/>
    <property type="evidence" value="ECO:0007669"/>
    <property type="project" value="TreeGrafter"/>
</dbReference>
<dbReference type="GO" id="GO:0006412">
    <property type="term" value="P:translation"/>
    <property type="evidence" value="ECO:0007669"/>
    <property type="project" value="UniProtKB-UniRule"/>
</dbReference>
<dbReference type="CDD" id="cd00392">
    <property type="entry name" value="Ribosomal_L13"/>
    <property type="match status" value="1"/>
</dbReference>
<dbReference type="FunFam" id="3.90.1180.10:FF:000001">
    <property type="entry name" value="50S ribosomal protein L13"/>
    <property type="match status" value="1"/>
</dbReference>
<dbReference type="Gene3D" id="3.90.1180.10">
    <property type="entry name" value="Ribosomal protein L13"/>
    <property type="match status" value="1"/>
</dbReference>
<dbReference type="HAMAP" id="MF_01366">
    <property type="entry name" value="Ribosomal_uL13"/>
    <property type="match status" value="1"/>
</dbReference>
<dbReference type="InterPro" id="IPR005822">
    <property type="entry name" value="Ribosomal_uL13"/>
</dbReference>
<dbReference type="InterPro" id="IPR005823">
    <property type="entry name" value="Ribosomal_uL13_bac-type"/>
</dbReference>
<dbReference type="InterPro" id="IPR023563">
    <property type="entry name" value="Ribosomal_uL13_CS"/>
</dbReference>
<dbReference type="InterPro" id="IPR036899">
    <property type="entry name" value="Ribosomal_uL13_sf"/>
</dbReference>
<dbReference type="NCBIfam" id="TIGR01066">
    <property type="entry name" value="rplM_bact"/>
    <property type="match status" value="1"/>
</dbReference>
<dbReference type="PANTHER" id="PTHR11545:SF2">
    <property type="entry name" value="LARGE RIBOSOMAL SUBUNIT PROTEIN UL13M"/>
    <property type="match status" value="1"/>
</dbReference>
<dbReference type="PANTHER" id="PTHR11545">
    <property type="entry name" value="RIBOSOMAL PROTEIN L13"/>
    <property type="match status" value="1"/>
</dbReference>
<dbReference type="Pfam" id="PF00572">
    <property type="entry name" value="Ribosomal_L13"/>
    <property type="match status" value="1"/>
</dbReference>
<dbReference type="PIRSF" id="PIRSF002181">
    <property type="entry name" value="Ribosomal_L13"/>
    <property type="match status" value="1"/>
</dbReference>
<dbReference type="SUPFAM" id="SSF52161">
    <property type="entry name" value="Ribosomal protein L13"/>
    <property type="match status" value="1"/>
</dbReference>
<dbReference type="PROSITE" id="PS00783">
    <property type="entry name" value="RIBOSOMAL_L13"/>
    <property type="match status" value="1"/>
</dbReference>
<proteinExistence type="inferred from homology"/>
<evidence type="ECO:0000255" key="1">
    <source>
        <dbReference type="HAMAP-Rule" id="MF_01366"/>
    </source>
</evidence>
<evidence type="ECO:0000305" key="2"/>
<comment type="function">
    <text evidence="1">This protein is one of the early assembly proteins of the 50S ribosomal subunit, although it is not seen to bind rRNA by itself. It is important during the early stages of 50S assembly.</text>
</comment>
<comment type="subunit">
    <text evidence="1">Part of the 50S ribosomal subunit.</text>
</comment>
<comment type="similarity">
    <text evidence="1">Belongs to the universal ribosomal protein uL13 family.</text>
</comment>
<sequence length="142" mass="16019">MKTFTAKPETVKRDWYVVDATGKTLGRLATELARRLRGKHKAEYTPHVDTGDYIIVLNADKVAVTGNKRTDKVYYHHTGHIGGIKQATFEEMIARRPERVIEIAVKGMLPKGPLGRAMFRKLKVYAGNEHNHAAQQPQVLDI</sequence>
<gene>
    <name evidence="1" type="primary">rplM</name>
    <name type="ordered locus">EcE24377A_3714</name>
</gene>
<keyword id="KW-1185">Reference proteome</keyword>
<keyword id="KW-0687">Ribonucleoprotein</keyword>
<keyword id="KW-0689">Ribosomal protein</keyword>
<reference key="1">
    <citation type="journal article" date="2008" name="J. Bacteriol.">
        <title>The pangenome structure of Escherichia coli: comparative genomic analysis of E. coli commensal and pathogenic isolates.</title>
        <authorList>
            <person name="Rasko D.A."/>
            <person name="Rosovitz M.J."/>
            <person name="Myers G.S.A."/>
            <person name="Mongodin E.F."/>
            <person name="Fricke W.F."/>
            <person name="Gajer P."/>
            <person name="Crabtree J."/>
            <person name="Sebaihia M."/>
            <person name="Thomson N.R."/>
            <person name="Chaudhuri R."/>
            <person name="Henderson I.R."/>
            <person name="Sperandio V."/>
            <person name="Ravel J."/>
        </authorList>
    </citation>
    <scope>NUCLEOTIDE SEQUENCE [LARGE SCALE GENOMIC DNA]</scope>
    <source>
        <strain>E24377A / ETEC</strain>
    </source>
</reference>
<feature type="chain" id="PRO_1000067992" description="Large ribosomal subunit protein uL13">
    <location>
        <begin position="1"/>
        <end position="142"/>
    </location>
</feature>
<protein>
    <recommendedName>
        <fullName evidence="1">Large ribosomal subunit protein uL13</fullName>
    </recommendedName>
    <alternativeName>
        <fullName evidence="2">50S ribosomal protein L13</fullName>
    </alternativeName>
</protein>
<organism>
    <name type="scientific">Escherichia coli O139:H28 (strain E24377A / ETEC)</name>
    <dbReference type="NCBI Taxonomy" id="331111"/>
    <lineage>
        <taxon>Bacteria</taxon>
        <taxon>Pseudomonadati</taxon>
        <taxon>Pseudomonadota</taxon>
        <taxon>Gammaproteobacteria</taxon>
        <taxon>Enterobacterales</taxon>
        <taxon>Enterobacteriaceae</taxon>
        <taxon>Escherichia</taxon>
    </lineage>
</organism>